<accession>A4WAF3</accession>
<feature type="chain" id="PRO_1000059440" description="Glutaminase">
    <location>
        <begin position="1"/>
        <end position="308"/>
    </location>
</feature>
<feature type="binding site" evidence="1">
    <location>
        <position position="66"/>
    </location>
    <ligand>
        <name>substrate</name>
    </ligand>
</feature>
<feature type="binding site" evidence="1">
    <location>
        <position position="117"/>
    </location>
    <ligand>
        <name>substrate</name>
    </ligand>
</feature>
<feature type="binding site" evidence="1">
    <location>
        <position position="161"/>
    </location>
    <ligand>
        <name>substrate</name>
    </ligand>
</feature>
<feature type="binding site" evidence="1">
    <location>
        <position position="168"/>
    </location>
    <ligand>
        <name>substrate</name>
    </ligand>
</feature>
<feature type="binding site" evidence="1">
    <location>
        <position position="192"/>
    </location>
    <ligand>
        <name>substrate</name>
    </ligand>
</feature>
<feature type="binding site" evidence="1">
    <location>
        <position position="244"/>
    </location>
    <ligand>
        <name>substrate</name>
    </ligand>
</feature>
<feature type="binding site" evidence="1">
    <location>
        <position position="262"/>
    </location>
    <ligand>
        <name>substrate</name>
    </ligand>
</feature>
<sequence length="308" mass="33548">MAAVIDNEMLDDILAQVRPLLGQGKVADYIPALASVSGNKLAIAICTVEGQLYQAGDATERFSIQSISKVLSLVAAMRQYEEDEIWQRVGKDPSGQPFNSLLQLEIEQGKPRNPFINAGALVVCDMLQSRLSAPRQRMLEIVRQLSGVSDLSYDANVARSEFEHSARNAAIAWLMKSFGNFHNDVATVLQNYFHYCALKMSCVELARTFLFLADKGYSSHHAQAVVTPMQARQVNALMATSGMYQNAGEFAWRVGLPAKSGVGGGVVAIVPHEMAIAVWSPELDDTGNSLAGVAVLEKLTQRLGRSVY</sequence>
<keyword id="KW-0378">Hydrolase</keyword>
<reference key="1">
    <citation type="journal article" date="2010" name="PLoS Genet.">
        <title>Genome sequence of the plant growth promoting endophytic bacterium Enterobacter sp. 638.</title>
        <authorList>
            <person name="Taghavi S."/>
            <person name="van der Lelie D."/>
            <person name="Hoffman A."/>
            <person name="Zhang Y.B."/>
            <person name="Walla M.D."/>
            <person name="Vangronsveld J."/>
            <person name="Newman L."/>
            <person name="Monchy S."/>
        </authorList>
    </citation>
    <scope>NUCLEOTIDE SEQUENCE [LARGE SCALE GENOMIC DNA]</scope>
    <source>
        <strain>638</strain>
    </source>
</reference>
<protein>
    <recommendedName>
        <fullName evidence="1">Glutaminase</fullName>
        <ecNumber evidence="1">3.5.1.2</ecNumber>
    </recommendedName>
</protein>
<proteinExistence type="inferred from homology"/>
<name>GLSA_ENT38</name>
<comment type="catalytic activity">
    <reaction evidence="1">
        <text>L-glutamine + H2O = L-glutamate + NH4(+)</text>
        <dbReference type="Rhea" id="RHEA:15889"/>
        <dbReference type="ChEBI" id="CHEBI:15377"/>
        <dbReference type="ChEBI" id="CHEBI:28938"/>
        <dbReference type="ChEBI" id="CHEBI:29985"/>
        <dbReference type="ChEBI" id="CHEBI:58359"/>
        <dbReference type="EC" id="3.5.1.2"/>
    </reaction>
</comment>
<comment type="subunit">
    <text evidence="1">Homotetramer.</text>
</comment>
<comment type="similarity">
    <text evidence="1">Belongs to the glutaminase family.</text>
</comment>
<gene>
    <name evidence="1" type="primary">glsA</name>
    <name type="ordered locus">Ent638_2007</name>
</gene>
<dbReference type="EC" id="3.5.1.2" evidence="1"/>
<dbReference type="EMBL" id="CP000653">
    <property type="protein sequence ID" value="ABP60683.1"/>
    <property type="molecule type" value="Genomic_DNA"/>
</dbReference>
<dbReference type="RefSeq" id="WP_012017398.1">
    <property type="nucleotide sequence ID" value="NC_009436.1"/>
</dbReference>
<dbReference type="SMR" id="A4WAF3"/>
<dbReference type="STRING" id="399742.Ent638_2007"/>
<dbReference type="KEGG" id="ent:Ent638_2007"/>
<dbReference type="eggNOG" id="COG2066">
    <property type="taxonomic scope" value="Bacteria"/>
</dbReference>
<dbReference type="HOGENOM" id="CLU_027932_1_1_6"/>
<dbReference type="OrthoDB" id="9788822at2"/>
<dbReference type="Proteomes" id="UP000000230">
    <property type="component" value="Chromosome"/>
</dbReference>
<dbReference type="GO" id="GO:0004359">
    <property type="term" value="F:glutaminase activity"/>
    <property type="evidence" value="ECO:0007669"/>
    <property type="project" value="UniProtKB-UniRule"/>
</dbReference>
<dbReference type="GO" id="GO:0006537">
    <property type="term" value="P:glutamate biosynthetic process"/>
    <property type="evidence" value="ECO:0007669"/>
    <property type="project" value="TreeGrafter"/>
</dbReference>
<dbReference type="GO" id="GO:0006543">
    <property type="term" value="P:glutamine catabolic process"/>
    <property type="evidence" value="ECO:0007669"/>
    <property type="project" value="TreeGrafter"/>
</dbReference>
<dbReference type="FunFam" id="3.40.710.10:FF:000005">
    <property type="entry name" value="Glutaminase"/>
    <property type="match status" value="1"/>
</dbReference>
<dbReference type="Gene3D" id="3.40.710.10">
    <property type="entry name" value="DD-peptidase/beta-lactamase superfamily"/>
    <property type="match status" value="1"/>
</dbReference>
<dbReference type="HAMAP" id="MF_00313">
    <property type="entry name" value="Glutaminase"/>
    <property type="match status" value="1"/>
</dbReference>
<dbReference type="InterPro" id="IPR012338">
    <property type="entry name" value="Beta-lactam/transpept-like"/>
</dbReference>
<dbReference type="InterPro" id="IPR015868">
    <property type="entry name" value="Glutaminase"/>
</dbReference>
<dbReference type="NCBIfam" id="TIGR03814">
    <property type="entry name" value="Gln_ase"/>
    <property type="match status" value="1"/>
</dbReference>
<dbReference type="NCBIfam" id="NF002132">
    <property type="entry name" value="PRK00971.1-1"/>
    <property type="match status" value="1"/>
</dbReference>
<dbReference type="NCBIfam" id="NF002133">
    <property type="entry name" value="PRK00971.1-2"/>
    <property type="match status" value="1"/>
</dbReference>
<dbReference type="PANTHER" id="PTHR12544">
    <property type="entry name" value="GLUTAMINASE"/>
    <property type="match status" value="1"/>
</dbReference>
<dbReference type="PANTHER" id="PTHR12544:SF29">
    <property type="entry name" value="GLUTAMINASE"/>
    <property type="match status" value="1"/>
</dbReference>
<dbReference type="Pfam" id="PF04960">
    <property type="entry name" value="Glutaminase"/>
    <property type="match status" value="1"/>
</dbReference>
<dbReference type="SUPFAM" id="SSF56601">
    <property type="entry name" value="beta-lactamase/transpeptidase-like"/>
    <property type="match status" value="1"/>
</dbReference>
<organism>
    <name type="scientific">Enterobacter sp. (strain 638)</name>
    <dbReference type="NCBI Taxonomy" id="399742"/>
    <lineage>
        <taxon>Bacteria</taxon>
        <taxon>Pseudomonadati</taxon>
        <taxon>Pseudomonadota</taxon>
        <taxon>Gammaproteobacteria</taxon>
        <taxon>Enterobacterales</taxon>
        <taxon>Enterobacteriaceae</taxon>
        <taxon>Enterobacter</taxon>
    </lineage>
</organism>
<evidence type="ECO:0000255" key="1">
    <source>
        <dbReference type="HAMAP-Rule" id="MF_00313"/>
    </source>
</evidence>